<name>LPXA_ECO8A</name>
<proteinExistence type="inferred from homology"/>
<organism>
    <name type="scientific">Escherichia coli O8 (strain IAI1)</name>
    <dbReference type="NCBI Taxonomy" id="585034"/>
    <lineage>
        <taxon>Bacteria</taxon>
        <taxon>Pseudomonadati</taxon>
        <taxon>Pseudomonadota</taxon>
        <taxon>Gammaproteobacteria</taxon>
        <taxon>Enterobacterales</taxon>
        <taxon>Enterobacteriaceae</taxon>
        <taxon>Escherichia</taxon>
    </lineage>
</organism>
<dbReference type="EC" id="2.3.1.129" evidence="1"/>
<dbReference type="EMBL" id="CU928160">
    <property type="protein sequence ID" value="CAQ97068.1"/>
    <property type="molecule type" value="Genomic_DNA"/>
</dbReference>
<dbReference type="RefSeq" id="WP_000565966.1">
    <property type="nucleotide sequence ID" value="NC_011741.1"/>
</dbReference>
<dbReference type="SMR" id="B7M1Y4"/>
<dbReference type="GeneID" id="93777244"/>
<dbReference type="KEGG" id="ecr:ECIAI1_0181"/>
<dbReference type="HOGENOM" id="CLU_061249_0_0_6"/>
<dbReference type="UniPathway" id="UPA00359">
    <property type="reaction ID" value="UER00477"/>
</dbReference>
<dbReference type="GO" id="GO:0005737">
    <property type="term" value="C:cytoplasm"/>
    <property type="evidence" value="ECO:0007669"/>
    <property type="project" value="UniProtKB-SubCell"/>
</dbReference>
<dbReference type="GO" id="GO:0016020">
    <property type="term" value="C:membrane"/>
    <property type="evidence" value="ECO:0007669"/>
    <property type="project" value="GOC"/>
</dbReference>
<dbReference type="GO" id="GO:0008780">
    <property type="term" value="F:acyl-[acyl-carrier-protein]-UDP-N-acetylglucosamine O-acyltransferase activity"/>
    <property type="evidence" value="ECO:0007669"/>
    <property type="project" value="UniProtKB-UniRule"/>
</dbReference>
<dbReference type="GO" id="GO:0009245">
    <property type="term" value="P:lipid A biosynthetic process"/>
    <property type="evidence" value="ECO:0007669"/>
    <property type="project" value="UniProtKB-UniRule"/>
</dbReference>
<dbReference type="CDD" id="cd03351">
    <property type="entry name" value="LbH_UDP-GlcNAc_AT"/>
    <property type="match status" value="1"/>
</dbReference>
<dbReference type="FunFam" id="1.20.1180.10:FF:000001">
    <property type="entry name" value="Acyl-[acyl-carrier-protein]--UDP-N-acetylglucosamine O-acyltransferase"/>
    <property type="match status" value="1"/>
</dbReference>
<dbReference type="FunFam" id="2.160.10.10:FF:000003">
    <property type="entry name" value="Acyl-[acyl-carrier-protein]--UDP-N-acetylglucosamine O-acyltransferase"/>
    <property type="match status" value="1"/>
</dbReference>
<dbReference type="Gene3D" id="2.160.10.10">
    <property type="entry name" value="Hexapeptide repeat proteins"/>
    <property type="match status" value="1"/>
</dbReference>
<dbReference type="Gene3D" id="1.20.1180.10">
    <property type="entry name" value="Udp N-acetylglucosamine O-acyltransferase, C-terminal domain"/>
    <property type="match status" value="1"/>
</dbReference>
<dbReference type="HAMAP" id="MF_00387">
    <property type="entry name" value="LpxA"/>
    <property type="match status" value="1"/>
</dbReference>
<dbReference type="InterPro" id="IPR029098">
    <property type="entry name" value="Acetyltransf_C"/>
</dbReference>
<dbReference type="InterPro" id="IPR037157">
    <property type="entry name" value="Acetyltransf_C_sf"/>
</dbReference>
<dbReference type="InterPro" id="IPR001451">
    <property type="entry name" value="Hexapep"/>
</dbReference>
<dbReference type="InterPro" id="IPR018357">
    <property type="entry name" value="Hexapep_transf_CS"/>
</dbReference>
<dbReference type="InterPro" id="IPR010137">
    <property type="entry name" value="Lipid_A_LpxA"/>
</dbReference>
<dbReference type="InterPro" id="IPR011004">
    <property type="entry name" value="Trimer_LpxA-like_sf"/>
</dbReference>
<dbReference type="NCBIfam" id="TIGR01852">
    <property type="entry name" value="lipid_A_lpxA"/>
    <property type="match status" value="1"/>
</dbReference>
<dbReference type="NCBIfam" id="NF003657">
    <property type="entry name" value="PRK05289.1"/>
    <property type="match status" value="1"/>
</dbReference>
<dbReference type="PANTHER" id="PTHR43480">
    <property type="entry name" value="ACYL-[ACYL-CARRIER-PROTEIN]--UDP-N-ACETYLGLUCOSAMINE O-ACYLTRANSFERASE"/>
    <property type="match status" value="1"/>
</dbReference>
<dbReference type="PANTHER" id="PTHR43480:SF1">
    <property type="entry name" value="ACYL-[ACYL-CARRIER-PROTEIN]--UDP-N-ACETYLGLUCOSAMINE O-ACYLTRANSFERASE, MITOCHONDRIAL-RELATED"/>
    <property type="match status" value="1"/>
</dbReference>
<dbReference type="Pfam" id="PF13720">
    <property type="entry name" value="Acetyltransf_11"/>
    <property type="match status" value="1"/>
</dbReference>
<dbReference type="Pfam" id="PF00132">
    <property type="entry name" value="Hexapep"/>
    <property type="match status" value="2"/>
</dbReference>
<dbReference type="PIRSF" id="PIRSF000456">
    <property type="entry name" value="UDP-GlcNAc_acltr"/>
    <property type="match status" value="1"/>
</dbReference>
<dbReference type="SUPFAM" id="SSF51161">
    <property type="entry name" value="Trimeric LpxA-like enzymes"/>
    <property type="match status" value="1"/>
</dbReference>
<dbReference type="PROSITE" id="PS00101">
    <property type="entry name" value="HEXAPEP_TRANSFERASES"/>
    <property type="match status" value="2"/>
</dbReference>
<feature type="chain" id="PRO_1000122703" description="Acyl-[acyl-carrier-protein]--UDP-N-acetylglucosamine O-acyltransferase">
    <location>
        <begin position="1"/>
        <end position="262"/>
    </location>
</feature>
<gene>
    <name evidence="1" type="primary">lpxA</name>
    <name type="ordered locus">ECIAI1_0181</name>
</gene>
<accession>B7M1Y4</accession>
<sequence length="262" mass="28080">MIDKSAFVHPTAIVEEGASIGANAHIGPFCIVGPHVEIGEGTVLKSHVVVNGHTKIGRDNEIYQFASIGEVNQDLKYAGEPTRVEIGDRNRIRESVTIHRGTVQGGGLTKVGSDNLLMINAHIAHDCTVGNRCILANNATLAGHVSVDDFAIIGGMTAVHQFCIIGAHVMVGGCSGVAQDVPPYVIAQGNHATPFGVNIEGLKRRGFSREAITAIRNAYKLIYRSGKTLDEVKPEIAELAETYPEVKAFTDFFARSTRGLIR</sequence>
<comment type="function">
    <text evidence="1">Involved in the biosynthesis of lipid A, a phosphorylated glycolipid that anchors the lipopolysaccharide to the outer membrane of the cell.</text>
</comment>
<comment type="catalytic activity">
    <reaction evidence="1">
        <text>a (3R)-hydroxyacyl-[ACP] + UDP-N-acetyl-alpha-D-glucosamine = a UDP-3-O-[(3R)-3-hydroxyacyl]-N-acetyl-alpha-D-glucosamine + holo-[ACP]</text>
        <dbReference type="Rhea" id="RHEA:67812"/>
        <dbReference type="Rhea" id="RHEA-COMP:9685"/>
        <dbReference type="Rhea" id="RHEA-COMP:9945"/>
        <dbReference type="ChEBI" id="CHEBI:57705"/>
        <dbReference type="ChEBI" id="CHEBI:64479"/>
        <dbReference type="ChEBI" id="CHEBI:78827"/>
        <dbReference type="ChEBI" id="CHEBI:173225"/>
        <dbReference type="EC" id="2.3.1.129"/>
    </reaction>
</comment>
<comment type="pathway">
    <text evidence="1">Glycolipid biosynthesis; lipid IV(A) biosynthesis; lipid IV(A) from (3R)-3-hydroxytetradecanoyl-[acyl-carrier-protein] and UDP-N-acetyl-alpha-D-glucosamine: step 1/6.</text>
</comment>
<comment type="subunit">
    <text evidence="1">Homotrimer.</text>
</comment>
<comment type="subcellular location">
    <subcellularLocation>
        <location evidence="1">Cytoplasm</location>
    </subcellularLocation>
</comment>
<comment type="similarity">
    <text evidence="1">Belongs to the transferase hexapeptide repeat family. LpxA subfamily.</text>
</comment>
<evidence type="ECO:0000255" key="1">
    <source>
        <dbReference type="HAMAP-Rule" id="MF_00387"/>
    </source>
</evidence>
<keyword id="KW-0012">Acyltransferase</keyword>
<keyword id="KW-0963">Cytoplasm</keyword>
<keyword id="KW-0441">Lipid A biosynthesis</keyword>
<keyword id="KW-0444">Lipid biosynthesis</keyword>
<keyword id="KW-0443">Lipid metabolism</keyword>
<keyword id="KW-0677">Repeat</keyword>
<keyword id="KW-0808">Transferase</keyword>
<protein>
    <recommendedName>
        <fullName evidence="1">Acyl-[acyl-carrier-protein]--UDP-N-acetylglucosamine O-acyltransferase</fullName>
        <shortName evidence="1">UDP-N-acetylglucosamine acyltransferase</shortName>
        <ecNumber evidence="1">2.3.1.129</ecNumber>
    </recommendedName>
</protein>
<reference key="1">
    <citation type="journal article" date="2009" name="PLoS Genet.">
        <title>Organised genome dynamics in the Escherichia coli species results in highly diverse adaptive paths.</title>
        <authorList>
            <person name="Touchon M."/>
            <person name="Hoede C."/>
            <person name="Tenaillon O."/>
            <person name="Barbe V."/>
            <person name="Baeriswyl S."/>
            <person name="Bidet P."/>
            <person name="Bingen E."/>
            <person name="Bonacorsi S."/>
            <person name="Bouchier C."/>
            <person name="Bouvet O."/>
            <person name="Calteau A."/>
            <person name="Chiapello H."/>
            <person name="Clermont O."/>
            <person name="Cruveiller S."/>
            <person name="Danchin A."/>
            <person name="Diard M."/>
            <person name="Dossat C."/>
            <person name="Karoui M.E."/>
            <person name="Frapy E."/>
            <person name="Garry L."/>
            <person name="Ghigo J.M."/>
            <person name="Gilles A.M."/>
            <person name="Johnson J."/>
            <person name="Le Bouguenec C."/>
            <person name="Lescat M."/>
            <person name="Mangenot S."/>
            <person name="Martinez-Jehanne V."/>
            <person name="Matic I."/>
            <person name="Nassif X."/>
            <person name="Oztas S."/>
            <person name="Petit M.A."/>
            <person name="Pichon C."/>
            <person name="Rouy Z."/>
            <person name="Ruf C.S."/>
            <person name="Schneider D."/>
            <person name="Tourret J."/>
            <person name="Vacherie B."/>
            <person name="Vallenet D."/>
            <person name="Medigue C."/>
            <person name="Rocha E.P.C."/>
            <person name="Denamur E."/>
        </authorList>
    </citation>
    <scope>NUCLEOTIDE SEQUENCE [LARGE SCALE GENOMIC DNA]</scope>
    <source>
        <strain>IAI1</strain>
    </source>
</reference>